<reference key="1">
    <citation type="journal article" date="2009" name="Appl. Environ. Microbiol.">
        <title>Genomic analysis of 'Elusimicrobium minutum,' the first cultivated representative of the phylum 'Elusimicrobia' (formerly termite group 1).</title>
        <authorList>
            <person name="Herlemann D.P.R."/>
            <person name="Geissinger O."/>
            <person name="Ikeda-Ohtsubo W."/>
            <person name="Kunin V."/>
            <person name="Sun H."/>
            <person name="Lapidus A."/>
            <person name="Hugenholtz P."/>
            <person name="Brune A."/>
        </authorList>
    </citation>
    <scope>NUCLEOTIDE SEQUENCE [LARGE SCALE GENOMIC DNA]</scope>
    <source>
        <strain>Pei191</strain>
    </source>
</reference>
<name>PNP_ELUMP</name>
<keyword id="KW-0963">Cytoplasm</keyword>
<keyword id="KW-0460">Magnesium</keyword>
<keyword id="KW-0479">Metal-binding</keyword>
<keyword id="KW-0548">Nucleotidyltransferase</keyword>
<keyword id="KW-1185">Reference proteome</keyword>
<keyword id="KW-0694">RNA-binding</keyword>
<keyword id="KW-0808">Transferase</keyword>
<proteinExistence type="inferred from homology"/>
<sequence length="698" mass="75647">MSNINKTTQDVIVGDKTLSLETGWVAKQADGSVIARMGDTMVLATAVSDKVQKPGISDFVPLTVNYKERTYAAGKIPGGFFKRESRASKKETLASRIIDRSLRPLFPSGYTCETNVTAMVLSADGVYDTEVLAVMASSTALIISSIPFTTPVAAVRIGRLNGNFIVNPTLEEQKSCDMDLIISGSLEGMLMVEGGAKEVSEEDVIKALETAKPAIDILCKAQLELKEKAGKEKFSFQAETVPQDVVDLGNNKYRAEVANILNAFYDKQTRDVKIAELKAAFAEEIKEAHGDNASTFAGITMENLSYEESRKLVLEKGVRVDGRKTDEIRQLNSITGLLPRAHGSALFTRGQTQGLVVTTLGTSGDAQLVESLEESYDETFMLHYNFPGFSTGECKPDRAPGRREIGHGELARRALLPLIPDADKFPYTIRVVSDIMESNGSSSMASVCGGSLSLFDAGVPMKAACSGIAMGLIKEGDKYAVLSDIMGLEDHLGDMDFKLTGSRNGITAFQMDVKLAGGISIEILKEAVAQATKGRMHIMDHMDSVLPEPRKDVSKFAPVIYTMRIPQDKIGALIGPGGKNIKRITETTDTKIDINDDGVVQIAAVNGDKLAMAKAEIELLTAEVELNKIYKGKVVSIQPFGAFVELIPGKDGLLHISEIDKKRINKVEDVLKMGDIVEVKVVEIDNNGKVRLSRKVLL</sequence>
<dbReference type="EC" id="2.7.7.8" evidence="1"/>
<dbReference type="EMBL" id="CP001055">
    <property type="protein sequence ID" value="ACC98718.1"/>
    <property type="molecule type" value="Genomic_DNA"/>
</dbReference>
<dbReference type="RefSeq" id="WP_012415333.1">
    <property type="nucleotide sequence ID" value="NC_010644.1"/>
</dbReference>
<dbReference type="SMR" id="B2KDX2"/>
<dbReference type="STRING" id="445932.Emin_1167"/>
<dbReference type="KEGG" id="emi:Emin_1167"/>
<dbReference type="HOGENOM" id="CLU_004217_2_2_0"/>
<dbReference type="OrthoDB" id="9804305at2"/>
<dbReference type="Proteomes" id="UP000001029">
    <property type="component" value="Chromosome"/>
</dbReference>
<dbReference type="GO" id="GO:0005829">
    <property type="term" value="C:cytosol"/>
    <property type="evidence" value="ECO:0007669"/>
    <property type="project" value="TreeGrafter"/>
</dbReference>
<dbReference type="GO" id="GO:0000175">
    <property type="term" value="F:3'-5'-RNA exonuclease activity"/>
    <property type="evidence" value="ECO:0007669"/>
    <property type="project" value="TreeGrafter"/>
</dbReference>
<dbReference type="GO" id="GO:0000287">
    <property type="term" value="F:magnesium ion binding"/>
    <property type="evidence" value="ECO:0007669"/>
    <property type="project" value="UniProtKB-UniRule"/>
</dbReference>
<dbReference type="GO" id="GO:0004654">
    <property type="term" value="F:polyribonucleotide nucleotidyltransferase activity"/>
    <property type="evidence" value="ECO:0007669"/>
    <property type="project" value="UniProtKB-UniRule"/>
</dbReference>
<dbReference type="GO" id="GO:0003723">
    <property type="term" value="F:RNA binding"/>
    <property type="evidence" value="ECO:0007669"/>
    <property type="project" value="UniProtKB-UniRule"/>
</dbReference>
<dbReference type="GO" id="GO:0006402">
    <property type="term" value="P:mRNA catabolic process"/>
    <property type="evidence" value="ECO:0007669"/>
    <property type="project" value="UniProtKB-UniRule"/>
</dbReference>
<dbReference type="GO" id="GO:0006396">
    <property type="term" value="P:RNA processing"/>
    <property type="evidence" value="ECO:0007669"/>
    <property type="project" value="InterPro"/>
</dbReference>
<dbReference type="CDD" id="cd02393">
    <property type="entry name" value="KH-I_PNPase"/>
    <property type="match status" value="1"/>
</dbReference>
<dbReference type="CDD" id="cd11363">
    <property type="entry name" value="RNase_PH_PNPase_1"/>
    <property type="match status" value="1"/>
</dbReference>
<dbReference type="CDD" id="cd11364">
    <property type="entry name" value="RNase_PH_PNPase_2"/>
    <property type="match status" value="1"/>
</dbReference>
<dbReference type="CDD" id="cd04472">
    <property type="entry name" value="S1_PNPase"/>
    <property type="match status" value="1"/>
</dbReference>
<dbReference type="FunFam" id="2.40.50.140:FF:000023">
    <property type="entry name" value="Polyribonucleotide nucleotidyltransferase"/>
    <property type="match status" value="1"/>
</dbReference>
<dbReference type="FunFam" id="3.30.1370.10:FF:000001">
    <property type="entry name" value="Polyribonucleotide nucleotidyltransferase"/>
    <property type="match status" value="1"/>
</dbReference>
<dbReference type="FunFam" id="3.30.230.70:FF:000001">
    <property type="entry name" value="Polyribonucleotide nucleotidyltransferase"/>
    <property type="match status" value="1"/>
</dbReference>
<dbReference type="FunFam" id="3.30.230.70:FF:000002">
    <property type="entry name" value="Polyribonucleotide nucleotidyltransferase"/>
    <property type="match status" value="1"/>
</dbReference>
<dbReference type="Gene3D" id="3.30.230.70">
    <property type="entry name" value="GHMP Kinase, N-terminal domain"/>
    <property type="match status" value="2"/>
</dbReference>
<dbReference type="Gene3D" id="3.30.1370.10">
    <property type="entry name" value="K Homology domain, type 1"/>
    <property type="match status" value="1"/>
</dbReference>
<dbReference type="Gene3D" id="2.40.50.140">
    <property type="entry name" value="Nucleic acid-binding proteins"/>
    <property type="match status" value="1"/>
</dbReference>
<dbReference type="HAMAP" id="MF_01595">
    <property type="entry name" value="PNPase"/>
    <property type="match status" value="1"/>
</dbReference>
<dbReference type="InterPro" id="IPR001247">
    <property type="entry name" value="ExoRNase_PH_dom1"/>
</dbReference>
<dbReference type="InterPro" id="IPR015847">
    <property type="entry name" value="ExoRNase_PH_dom2"/>
</dbReference>
<dbReference type="InterPro" id="IPR036345">
    <property type="entry name" value="ExoRNase_PH_dom2_sf"/>
</dbReference>
<dbReference type="InterPro" id="IPR004087">
    <property type="entry name" value="KH_dom"/>
</dbReference>
<dbReference type="InterPro" id="IPR004088">
    <property type="entry name" value="KH_dom_type_1"/>
</dbReference>
<dbReference type="InterPro" id="IPR036612">
    <property type="entry name" value="KH_dom_type_1_sf"/>
</dbReference>
<dbReference type="InterPro" id="IPR012340">
    <property type="entry name" value="NA-bd_OB-fold"/>
</dbReference>
<dbReference type="InterPro" id="IPR012162">
    <property type="entry name" value="PNPase"/>
</dbReference>
<dbReference type="InterPro" id="IPR027408">
    <property type="entry name" value="PNPase/RNase_PH_dom_sf"/>
</dbReference>
<dbReference type="InterPro" id="IPR015848">
    <property type="entry name" value="PNPase_PH_RNA-bd_bac/org-type"/>
</dbReference>
<dbReference type="InterPro" id="IPR036456">
    <property type="entry name" value="PNPase_PH_RNA-bd_sf"/>
</dbReference>
<dbReference type="InterPro" id="IPR020568">
    <property type="entry name" value="Ribosomal_Su5_D2-typ_SF"/>
</dbReference>
<dbReference type="InterPro" id="IPR003029">
    <property type="entry name" value="S1_domain"/>
</dbReference>
<dbReference type="NCBIfam" id="TIGR03591">
    <property type="entry name" value="polynuc_phos"/>
    <property type="match status" value="1"/>
</dbReference>
<dbReference type="NCBIfam" id="NF008805">
    <property type="entry name" value="PRK11824.1"/>
    <property type="match status" value="1"/>
</dbReference>
<dbReference type="PANTHER" id="PTHR11252">
    <property type="entry name" value="POLYRIBONUCLEOTIDE NUCLEOTIDYLTRANSFERASE"/>
    <property type="match status" value="1"/>
</dbReference>
<dbReference type="PANTHER" id="PTHR11252:SF0">
    <property type="entry name" value="POLYRIBONUCLEOTIDE NUCLEOTIDYLTRANSFERASE 1, MITOCHONDRIAL"/>
    <property type="match status" value="1"/>
</dbReference>
<dbReference type="Pfam" id="PF00013">
    <property type="entry name" value="KH_1"/>
    <property type="match status" value="1"/>
</dbReference>
<dbReference type="Pfam" id="PF03726">
    <property type="entry name" value="PNPase"/>
    <property type="match status" value="1"/>
</dbReference>
<dbReference type="Pfam" id="PF01138">
    <property type="entry name" value="RNase_PH"/>
    <property type="match status" value="2"/>
</dbReference>
<dbReference type="Pfam" id="PF03725">
    <property type="entry name" value="RNase_PH_C"/>
    <property type="match status" value="1"/>
</dbReference>
<dbReference type="Pfam" id="PF00575">
    <property type="entry name" value="S1"/>
    <property type="match status" value="1"/>
</dbReference>
<dbReference type="PIRSF" id="PIRSF005499">
    <property type="entry name" value="PNPase"/>
    <property type="match status" value="1"/>
</dbReference>
<dbReference type="SMART" id="SM00322">
    <property type="entry name" value="KH"/>
    <property type="match status" value="1"/>
</dbReference>
<dbReference type="SMART" id="SM00316">
    <property type="entry name" value="S1"/>
    <property type="match status" value="1"/>
</dbReference>
<dbReference type="SUPFAM" id="SSF54791">
    <property type="entry name" value="Eukaryotic type KH-domain (KH-domain type I)"/>
    <property type="match status" value="1"/>
</dbReference>
<dbReference type="SUPFAM" id="SSF50249">
    <property type="entry name" value="Nucleic acid-binding proteins"/>
    <property type="match status" value="1"/>
</dbReference>
<dbReference type="SUPFAM" id="SSF46915">
    <property type="entry name" value="Polynucleotide phosphorylase/guanosine pentaphosphate synthase (PNPase/GPSI), domain 3"/>
    <property type="match status" value="1"/>
</dbReference>
<dbReference type="SUPFAM" id="SSF55666">
    <property type="entry name" value="Ribonuclease PH domain 2-like"/>
    <property type="match status" value="2"/>
</dbReference>
<dbReference type="SUPFAM" id="SSF54211">
    <property type="entry name" value="Ribosomal protein S5 domain 2-like"/>
    <property type="match status" value="2"/>
</dbReference>
<dbReference type="PROSITE" id="PS50084">
    <property type="entry name" value="KH_TYPE_1"/>
    <property type="match status" value="1"/>
</dbReference>
<dbReference type="PROSITE" id="PS50126">
    <property type="entry name" value="S1"/>
    <property type="match status" value="1"/>
</dbReference>
<protein>
    <recommendedName>
        <fullName evidence="1">Polyribonucleotide nucleotidyltransferase</fullName>
        <ecNumber evidence="1">2.7.7.8</ecNumber>
    </recommendedName>
    <alternativeName>
        <fullName evidence="1">Polynucleotide phosphorylase</fullName>
        <shortName evidence="1">PNPase</shortName>
    </alternativeName>
</protein>
<evidence type="ECO:0000255" key="1">
    <source>
        <dbReference type="HAMAP-Rule" id="MF_01595"/>
    </source>
</evidence>
<accession>B2KDX2</accession>
<gene>
    <name evidence="1" type="primary">pnp</name>
    <name type="ordered locus">Emin_1167</name>
</gene>
<feature type="chain" id="PRO_0000381886" description="Polyribonucleotide nucleotidyltransferase">
    <location>
        <begin position="1"/>
        <end position="698"/>
    </location>
</feature>
<feature type="domain" description="KH" evidence="1">
    <location>
        <begin position="558"/>
        <end position="617"/>
    </location>
</feature>
<feature type="domain" description="S1 motif" evidence="1">
    <location>
        <begin position="627"/>
        <end position="695"/>
    </location>
</feature>
<feature type="binding site" evidence="1">
    <location>
        <position position="490"/>
    </location>
    <ligand>
        <name>Mg(2+)</name>
        <dbReference type="ChEBI" id="CHEBI:18420"/>
    </ligand>
</feature>
<feature type="binding site" evidence="1">
    <location>
        <position position="496"/>
    </location>
    <ligand>
        <name>Mg(2+)</name>
        <dbReference type="ChEBI" id="CHEBI:18420"/>
    </ligand>
</feature>
<comment type="function">
    <text evidence="1">Involved in mRNA degradation. Catalyzes the phosphorolysis of single-stranded polyribonucleotides processively in the 3'- to 5'-direction.</text>
</comment>
<comment type="catalytic activity">
    <reaction evidence="1">
        <text>RNA(n+1) + phosphate = RNA(n) + a ribonucleoside 5'-diphosphate</text>
        <dbReference type="Rhea" id="RHEA:22096"/>
        <dbReference type="Rhea" id="RHEA-COMP:14527"/>
        <dbReference type="Rhea" id="RHEA-COMP:17342"/>
        <dbReference type="ChEBI" id="CHEBI:43474"/>
        <dbReference type="ChEBI" id="CHEBI:57930"/>
        <dbReference type="ChEBI" id="CHEBI:140395"/>
        <dbReference type="EC" id="2.7.7.8"/>
    </reaction>
</comment>
<comment type="cofactor">
    <cofactor evidence="1">
        <name>Mg(2+)</name>
        <dbReference type="ChEBI" id="CHEBI:18420"/>
    </cofactor>
</comment>
<comment type="subcellular location">
    <subcellularLocation>
        <location evidence="1">Cytoplasm</location>
    </subcellularLocation>
</comment>
<comment type="similarity">
    <text evidence="1">Belongs to the polyribonucleotide nucleotidyltransferase family.</text>
</comment>
<organism>
    <name type="scientific">Elusimicrobium minutum (strain Pei191)</name>
    <dbReference type="NCBI Taxonomy" id="445932"/>
    <lineage>
        <taxon>Bacteria</taxon>
        <taxon>Pseudomonadati</taxon>
        <taxon>Elusimicrobiota</taxon>
        <taxon>Elusimicrobia</taxon>
        <taxon>Elusimicrobiales</taxon>
        <taxon>Elusimicrobiaceae</taxon>
        <taxon>Elusimicrobium</taxon>
    </lineage>
</organism>